<protein>
    <recommendedName>
        <fullName evidence="1">U-scoloptoxin(10)-Ssd2a</fullName>
        <shortName evidence="1">U-SLPTX(10)-Ssd2a</shortName>
    </recommendedName>
    <alternativeName>
        <fullName evidence="3">Toxin SSD1020</fullName>
    </alternativeName>
</protein>
<reference key="1">
    <citation type="journal article" date="2012" name="J. Proteome Res.">
        <title>Venomic and transcriptomic analysis of centipede Scolopendra subspinipes dehaani.</title>
        <authorList>
            <person name="Liu Z.C."/>
            <person name="Zhang R."/>
            <person name="Zhao F."/>
            <person name="Chen Z.M."/>
            <person name="Liu H.W."/>
            <person name="Wang Y.J."/>
            <person name="Jiang P."/>
            <person name="Zhang Y."/>
            <person name="Wu Y."/>
            <person name="Ding J.P."/>
            <person name="Lee W.H."/>
            <person name="Zhang Y."/>
        </authorList>
    </citation>
    <scope>NUCLEOTIDE SEQUENCE [MRNA]</scope>
    <scope>PROTEIN SEQUENCE OF 24-46</scope>
    <scope>SUBCELLULAR LOCATION</scope>
    <scope>MASS SPECTROMETRY</scope>
    <source>
        <tissue>Venom</tissue>
        <tissue>Venom gland</tissue>
    </source>
</reference>
<feature type="signal peptide" evidence="2">
    <location>
        <begin position="1"/>
        <end position="23"/>
    </location>
</feature>
<feature type="chain" id="PRO_0000446757" description="U-scoloptoxin(10)-Ssd2a" evidence="4">
    <location>
        <begin position="24"/>
        <end position="97"/>
    </location>
</feature>
<proteinExistence type="evidence at protein level"/>
<sequence>MNKSMLIFFTILFLTYIIEEKEALKVEDLPEPESYKRAKQLAVKDAKGDKNAETIALNFLKQNRRDCMKNCKLVPTCALLSPECCPDKTDVCKKLAL</sequence>
<evidence type="ECO:0000250" key="1">
    <source>
        <dbReference type="UniProtKB" id="P0DPZ2"/>
    </source>
</evidence>
<evidence type="ECO:0000269" key="2">
    <source>
    </source>
</evidence>
<evidence type="ECO:0000303" key="3">
    <source>
    </source>
</evidence>
<evidence type="ECO:0000305" key="4"/>
<evidence type="ECO:0000305" key="5">
    <source>
    </source>
</evidence>
<dbReference type="EMBL" id="KC145009">
    <property type="status" value="NOT_ANNOTATED_CDS"/>
    <property type="molecule type" value="mRNA"/>
</dbReference>
<dbReference type="SMR" id="P0DPV1"/>
<dbReference type="GO" id="GO:0005576">
    <property type="term" value="C:extracellular region"/>
    <property type="evidence" value="ECO:0007669"/>
    <property type="project" value="UniProtKB-SubCell"/>
</dbReference>
<dbReference type="GO" id="GO:0090729">
    <property type="term" value="F:toxin activity"/>
    <property type="evidence" value="ECO:0007669"/>
    <property type="project" value="UniProtKB-KW"/>
</dbReference>
<name>TXA2A_SCODE</name>
<organism>
    <name type="scientific">Scolopendra dehaani</name>
    <name type="common">Thai centipede</name>
    <name type="synonym">Scolopendra subspinipes dehaani</name>
    <dbReference type="NCBI Taxonomy" id="2609776"/>
    <lineage>
        <taxon>Eukaryota</taxon>
        <taxon>Metazoa</taxon>
        <taxon>Ecdysozoa</taxon>
        <taxon>Arthropoda</taxon>
        <taxon>Myriapoda</taxon>
        <taxon>Chilopoda</taxon>
        <taxon>Pleurostigmophora</taxon>
        <taxon>Scolopendromorpha</taxon>
        <taxon>Scolopendridae</taxon>
        <taxon>Scolopendra</taxon>
    </lineage>
</organism>
<keyword id="KW-0903">Direct protein sequencing</keyword>
<keyword id="KW-1015">Disulfide bond</keyword>
<keyword id="KW-0964">Secreted</keyword>
<keyword id="KW-0732">Signal</keyword>
<keyword id="KW-0800">Toxin</keyword>
<accession>P0DPV1</accession>
<comment type="subcellular location">
    <subcellularLocation>
        <location evidence="2">Secreted</location>
    </subcellularLocation>
</comment>
<comment type="tissue specificity">
    <text evidence="5">Expressed by the venom gland.</text>
</comment>
<comment type="PTM">
    <text evidence="4">Contains 3 disulfide bonds.</text>
</comment>
<comment type="mass spectrometry"/>
<comment type="similarity">
    <text evidence="4">Belongs to the scoloptoxin-10 family.</text>
</comment>